<sequence>MLCCCVNSENNKKYAELDAKLARKMVESRSIYPGHRSLKSMDSIIMKFPKLREGLRNIRSVFESYDNDTNGTIDIEELKKCLEELKLSLSDEEVKGLYSWCDVDGSKGIQFNEFIVLLCLIYLLAKPSSESSTESREMGPKLVESIFDPIVEVFLFLDKDGKGKLNKADVIKTLNNEDYPLERSPSHVTNMRFEEMDWGRKGKVGFREFLFAFMSWVGLDDADDDFMSS</sequence>
<gene>
    <name type="primary">CML22</name>
    <name type="ordered locus">At3g24110</name>
    <name type="ORF">MUJ8.1</name>
</gene>
<comment type="function">
    <text evidence="1">Potential calcium sensor.</text>
</comment>
<comment type="caution">
    <text evidence="3">Although assigned as a calmodulin family member by Ref.3, it only contains EF-hand domains.</text>
</comment>
<proteinExistence type="inferred from homology"/>
<name>CML22_ARATH</name>
<keyword id="KW-0106">Calcium</keyword>
<keyword id="KW-0479">Metal-binding</keyword>
<keyword id="KW-1185">Reference proteome</keyword>
<keyword id="KW-0677">Repeat</keyword>
<reference key="1">
    <citation type="journal article" date="2000" name="DNA Res.">
        <title>Structural analysis of Arabidopsis thaliana chromosome 3. I. Sequence features of the regions of 4,504,864 bp covered by sixty P1 and TAC clones.</title>
        <authorList>
            <person name="Sato S."/>
            <person name="Nakamura Y."/>
            <person name="Kaneko T."/>
            <person name="Katoh T."/>
            <person name="Asamizu E."/>
            <person name="Tabata S."/>
        </authorList>
    </citation>
    <scope>NUCLEOTIDE SEQUENCE [LARGE SCALE GENOMIC DNA]</scope>
    <source>
        <strain>cv. Columbia</strain>
    </source>
</reference>
<reference key="2">
    <citation type="journal article" date="2017" name="Plant J.">
        <title>Araport11: a complete reannotation of the Arabidopsis thaliana reference genome.</title>
        <authorList>
            <person name="Cheng C.Y."/>
            <person name="Krishnakumar V."/>
            <person name="Chan A.P."/>
            <person name="Thibaud-Nissen F."/>
            <person name="Schobel S."/>
            <person name="Town C.D."/>
        </authorList>
    </citation>
    <scope>GENOME REANNOTATION</scope>
    <source>
        <strain>cv. Columbia</strain>
    </source>
</reference>
<reference key="3">
    <citation type="journal article" date="2003" name="New Phytol.">
        <title>Calmodulins and related potential calcium sensors of Arabidopsis.</title>
        <authorList>
            <person name="McCormack E."/>
            <person name="Braam J."/>
        </authorList>
    </citation>
    <scope>GENE FAMILY</scope>
    <scope>NOMENCLATURE</scope>
</reference>
<evidence type="ECO:0000250" key="1"/>
<evidence type="ECO:0000255" key="2">
    <source>
        <dbReference type="PROSITE-ProRule" id="PRU00448"/>
    </source>
</evidence>
<evidence type="ECO:0000305" key="3"/>
<feature type="chain" id="PRO_0000342951" description="Probable calcium-binding protein CML22">
    <location>
        <begin position="1"/>
        <end position="229"/>
    </location>
</feature>
<feature type="domain" description="EF-hand 1" evidence="2">
    <location>
        <begin position="53"/>
        <end position="88"/>
    </location>
</feature>
<feature type="domain" description="EF-hand 2" evidence="2">
    <location>
        <begin position="89"/>
        <end position="124"/>
    </location>
</feature>
<feature type="domain" description="EF-hand 3" evidence="2">
    <location>
        <begin position="145"/>
        <end position="180"/>
    </location>
</feature>
<feature type="domain" description="EF-hand 4" evidence="2">
    <location>
        <begin position="184"/>
        <end position="219"/>
    </location>
</feature>
<feature type="binding site" evidence="2">
    <location>
        <position position="66"/>
    </location>
    <ligand>
        <name>Ca(2+)</name>
        <dbReference type="ChEBI" id="CHEBI:29108"/>
    </ligand>
</feature>
<feature type="binding site" evidence="2">
    <location>
        <position position="68"/>
    </location>
    <ligand>
        <name>Ca(2+)</name>
        <dbReference type="ChEBI" id="CHEBI:29108"/>
    </ligand>
</feature>
<feature type="binding site" evidence="2">
    <location>
        <position position="70"/>
    </location>
    <ligand>
        <name>Ca(2+)</name>
        <dbReference type="ChEBI" id="CHEBI:29108"/>
    </ligand>
</feature>
<feature type="binding site" evidence="2">
    <location>
        <position position="72"/>
    </location>
    <ligand>
        <name>Ca(2+)</name>
        <dbReference type="ChEBI" id="CHEBI:29108"/>
    </ligand>
</feature>
<feature type="binding site" evidence="2">
    <location>
        <position position="77"/>
    </location>
    <ligand>
        <name>Ca(2+)</name>
        <dbReference type="ChEBI" id="CHEBI:29108"/>
    </ligand>
</feature>
<dbReference type="EMBL" id="AB028621">
    <property type="protein sequence ID" value="BAB01352.1"/>
    <property type="molecule type" value="Genomic_DNA"/>
</dbReference>
<dbReference type="EMBL" id="CP002686">
    <property type="protein sequence ID" value="ANM65247.1"/>
    <property type="molecule type" value="Genomic_DNA"/>
</dbReference>
<dbReference type="RefSeq" id="NP_189053.1">
    <property type="nucleotide sequence ID" value="NM_113316.2"/>
</dbReference>
<dbReference type="SMR" id="Q9LRN6"/>
<dbReference type="FunCoup" id="Q9LRN6">
    <property type="interactions" value="212"/>
</dbReference>
<dbReference type="STRING" id="3702.Q9LRN6"/>
<dbReference type="iPTMnet" id="Q9LRN6"/>
<dbReference type="PaxDb" id="3702-AT3G24110.1"/>
<dbReference type="ProteomicsDB" id="241077"/>
<dbReference type="EnsemblPlants" id="AT3G24110.2">
    <property type="protein sequence ID" value="AT3G24110.2"/>
    <property type="gene ID" value="AT3G24110"/>
</dbReference>
<dbReference type="GeneID" id="821997"/>
<dbReference type="Gramene" id="AT3G24110.2">
    <property type="protein sequence ID" value="AT3G24110.2"/>
    <property type="gene ID" value="AT3G24110"/>
</dbReference>
<dbReference type="KEGG" id="ath:AT3G24110"/>
<dbReference type="Araport" id="AT3G24110"/>
<dbReference type="TAIR" id="AT3G24110"/>
<dbReference type="eggNOG" id="KOG0027">
    <property type="taxonomic scope" value="Eukaryota"/>
</dbReference>
<dbReference type="HOGENOM" id="CLU_069274_1_1_1"/>
<dbReference type="InParanoid" id="Q9LRN6"/>
<dbReference type="OMA" id="LSIIRWA"/>
<dbReference type="OrthoDB" id="26525at2759"/>
<dbReference type="PhylomeDB" id="Q9LRN6"/>
<dbReference type="PRO" id="PR:Q9LRN6"/>
<dbReference type="Proteomes" id="UP000006548">
    <property type="component" value="Chromosome 3"/>
</dbReference>
<dbReference type="ExpressionAtlas" id="Q9LRN6">
    <property type="expression patterns" value="baseline and differential"/>
</dbReference>
<dbReference type="GO" id="GO:0005509">
    <property type="term" value="F:calcium ion binding"/>
    <property type="evidence" value="ECO:0007669"/>
    <property type="project" value="InterPro"/>
</dbReference>
<dbReference type="CDD" id="cd00051">
    <property type="entry name" value="EFh"/>
    <property type="match status" value="1"/>
</dbReference>
<dbReference type="Gene3D" id="1.10.238.10">
    <property type="entry name" value="EF-hand"/>
    <property type="match status" value="1"/>
</dbReference>
<dbReference type="InterPro" id="IPR052591">
    <property type="entry name" value="CML21-like"/>
</dbReference>
<dbReference type="InterPro" id="IPR011992">
    <property type="entry name" value="EF-hand-dom_pair"/>
</dbReference>
<dbReference type="InterPro" id="IPR018247">
    <property type="entry name" value="EF_Hand_1_Ca_BS"/>
</dbReference>
<dbReference type="InterPro" id="IPR002048">
    <property type="entry name" value="EF_hand_dom"/>
</dbReference>
<dbReference type="PANTHER" id="PTHR23064">
    <property type="entry name" value="TROPONIN"/>
    <property type="match status" value="1"/>
</dbReference>
<dbReference type="Pfam" id="PF13499">
    <property type="entry name" value="EF-hand_7"/>
    <property type="match status" value="1"/>
</dbReference>
<dbReference type="SMART" id="SM00054">
    <property type="entry name" value="EFh"/>
    <property type="match status" value="2"/>
</dbReference>
<dbReference type="SUPFAM" id="SSF47473">
    <property type="entry name" value="EF-hand"/>
    <property type="match status" value="1"/>
</dbReference>
<dbReference type="PROSITE" id="PS00018">
    <property type="entry name" value="EF_HAND_1"/>
    <property type="match status" value="1"/>
</dbReference>
<dbReference type="PROSITE" id="PS50222">
    <property type="entry name" value="EF_HAND_2"/>
    <property type="match status" value="4"/>
</dbReference>
<accession>Q9LRN6</accession>
<organism>
    <name type="scientific">Arabidopsis thaliana</name>
    <name type="common">Mouse-ear cress</name>
    <dbReference type="NCBI Taxonomy" id="3702"/>
    <lineage>
        <taxon>Eukaryota</taxon>
        <taxon>Viridiplantae</taxon>
        <taxon>Streptophyta</taxon>
        <taxon>Embryophyta</taxon>
        <taxon>Tracheophyta</taxon>
        <taxon>Spermatophyta</taxon>
        <taxon>Magnoliopsida</taxon>
        <taxon>eudicotyledons</taxon>
        <taxon>Gunneridae</taxon>
        <taxon>Pentapetalae</taxon>
        <taxon>rosids</taxon>
        <taxon>malvids</taxon>
        <taxon>Brassicales</taxon>
        <taxon>Brassicaceae</taxon>
        <taxon>Camelineae</taxon>
        <taxon>Arabidopsis</taxon>
    </lineage>
</organism>
<protein>
    <recommendedName>
        <fullName>Probable calcium-binding protein CML22</fullName>
    </recommendedName>
    <alternativeName>
        <fullName>Calmodulin-like protein 22</fullName>
    </alternativeName>
</protein>